<reference key="1">
    <citation type="journal article" date="2011" name="J. Bacteriol.">
        <title>Comparative genomics of 28 Salmonella enterica isolates: evidence for CRISPR-mediated adaptive sublineage evolution.</title>
        <authorList>
            <person name="Fricke W.F."/>
            <person name="Mammel M.K."/>
            <person name="McDermott P.F."/>
            <person name="Tartera C."/>
            <person name="White D.G."/>
            <person name="Leclerc J.E."/>
            <person name="Ravel J."/>
            <person name="Cebula T.A."/>
        </authorList>
    </citation>
    <scope>NUCLEOTIDE SEQUENCE [LARGE SCALE GENOMIC DNA]</scope>
    <source>
        <strain>SL476</strain>
    </source>
</reference>
<comment type="function">
    <text evidence="1">Participates actively in the response to hyperosmotic and heat shock by preventing the aggregation of stress-denatured proteins and by disaggregating proteins, also in an autonomous, DnaK-independent fashion. Unfolded proteins bind initially to DnaJ; upon interaction with the DnaJ-bound protein, DnaK hydrolyzes its bound ATP, resulting in the formation of a stable complex. GrpE releases ADP from DnaK; ATP binding to DnaK triggers the release of the substrate protein, thus completing the reaction cycle. Several rounds of ATP-dependent interactions between DnaJ, DnaK and GrpE are required for fully efficient folding. Also involved, together with DnaK and GrpE, in the DNA replication of plasmids through activation of initiation proteins.</text>
</comment>
<comment type="cofactor">
    <cofactor evidence="1">
        <name>Zn(2+)</name>
        <dbReference type="ChEBI" id="CHEBI:29105"/>
    </cofactor>
    <text evidence="1">Binds 2 Zn(2+) ions per monomer.</text>
</comment>
<comment type="subunit">
    <text evidence="1">Homodimer.</text>
</comment>
<comment type="subcellular location">
    <subcellularLocation>
        <location evidence="1">Cytoplasm</location>
    </subcellularLocation>
</comment>
<comment type="domain">
    <text evidence="1">The J domain is necessary and sufficient to stimulate DnaK ATPase activity. Zinc center 1 plays an important role in the autonomous, DnaK-independent chaperone activity of DnaJ. Zinc center 2 is essential for interaction with DnaK and for DnaJ activity.</text>
</comment>
<comment type="similarity">
    <text evidence="1">Belongs to the DnaJ family.</text>
</comment>
<sequence>MAKRDYYEILGVSKTAEEREIKKAYKRLAMKYHPDRNQGDKEAEAKFKEIKEAYEVLTDAQKRAAYDQYGHAAFEQGGMGGGFGGGFNGGADFSDIFGDVFGDIFGGGRGRQRAARGADLRYNMDLTLEEAVRGVTKEIRIPTLEECDVCHGSGAKAGTQPQTCPTCHGSGQVQMRQGFFAVQQTCPHCQGRGTLIKDPCHKCHGHGRVEKSKTLSVKIPAGVDTGDRIRLAGEGEAGEHGAPAGDLYVQVQVKQHPIFEREGNNLYCEVPINFAMAALGGEIEVPTLDGRVMLKVPSETQTGKLFRMRGKGVKSVRGGAQGDLLCRVVVETPVGLSEKQKQLLKDLQESFGGPTGEKNSPRSKSFFDGVKKFFDDLTR</sequence>
<organism>
    <name type="scientific">Salmonella heidelberg (strain SL476)</name>
    <dbReference type="NCBI Taxonomy" id="454169"/>
    <lineage>
        <taxon>Bacteria</taxon>
        <taxon>Pseudomonadati</taxon>
        <taxon>Pseudomonadota</taxon>
        <taxon>Gammaproteobacteria</taxon>
        <taxon>Enterobacterales</taxon>
        <taxon>Enterobacteriaceae</taxon>
        <taxon>Salmonella</taxon>
    </lineage>
</organism>
<gene>
    <name evidence="1" type="primary">dnaJ</name>
    <name type="ordered locus">SeHA_C0014</name>
</gene>
<dbReference type="EMBL" id="CP001120">
    <property type="protein sequence ID" value="ACF70074.1"/>
    <property type="molecule type" value="Genomic_DNA"/>
</dbReference>
<dbReference type="RefSeq" id="WP_001119009.1">
    <property type="nucleotide sequence ID" value="NC_011083.1"/>
</dbReference>
<dbReference type="SMR" id="B4TIB5"/>
<dbReference type="KEGG" id="seh:SeHA_C0014"/>
<dbReference type="HOGENOM" id="CLU_017633_0_7_6"/>
<dbReference type="Proteomes" id="UP000001866">
    <property type="component" value="Chromosome"/>
</dbReference>
<dbReference type="GO" id="GO:0005737">
    <property type="term" value="C:cytoplasm"/>
    <property type="evidence" value="ECO:0007669"/>
    <property type="project" value="UniProtKB-SubCell"/>
</dbReference>
<dbReference type="GO" id="GO:0005524">
    <property type="term" value="F:ATP binding"/>
    <property type="evidence" value="ECO:0007669"/>
    <property type="project" value="InterPro"/>
</dbReference>
<dbReference type="GO" id="GO:0031072">
    <property type="term" value="F:heat shock protein binding"/>
    <property type="evidence" value="ECO:0007669"/>
    <property type="project" value="InterPro"/>
</dbReference>
<dbReference type="GO" id="GO:0051082">
    <property type="term" value="F:unfolded protein binding"/>
    <property type="evidence" value="ECO:0007669"/>
    <property type="project" value="UniProtKB-UniRule"/>
</dbReference>
<dbReference type="GO" id="GO:0008270">
    <property type="term" value="F:zinc ion binding"/>
    <property type="evidence" value="ECO:0007669"/>
    <property type="project" value="UniProtKB-UniRule"/>
</dbReference>
<dbReference type="GO" id="GO:0051085">
    <property type="term" value="P:chaperone cofactor-dependent protein refolding"/>
    <property type="evidence" value="ECO:0007669"/>
    <property type="project" value="TreeGrafter"/>
</dbReference>
<dbReference type="GO" id="GO:0006260">
    <property type="term" value="P:DNA replication"/>
    <property type="evidence" value="ECO:0007669"/>
    <property type="project" value="UniProtKB-KW"/>
</dbReference>
<dbReference type="GO" id="GO:0042026">
    <property type="term" value="P:protein refolding"/>
    <property type="evidence" value="ECO:0007669"/>
    <property type="project" value="TreeGrafter"/>
</dbReference>
<dbReference type="GO" id="GO:0009408">
    <property type="term" value="P:response to heat"/>
    <property type="evidence" value="ECO:0007669"/>
    <property type="project" value="InterPro"/>
</dbReference>
<dbReference type="CDD" id="cd06257">
    <property type="entry name" value="DnaJ"/>
    <property type="match status" value="1"/>
</dbReference>
<dbReference type="CDD" id="cd10747">
    <property type="entry name" value="DnaJ_C"/>
    <property type="match status" value="1"/>
</dbReference>
<dbReference type="CDD" id="cd10719">
    <property type="entry name" value="DnaJ_zf"/>
    <property type="match status" value="1"/>
</dbReference>
<dbReference type="FunFam" id="1.10.287.110:FF:000003">
    <property type="entry name" value="Molecular chaperone DnaJ"/>
    <property type="match status" value="1"/>
</dbReference>
<dbReference type="FunFam" id="2.10.230.10:FF:000002">
    <property type="entry name" value="Molecular chaperone DnaJ"/>
    <property type="match status" value="1"/>
</dbReference>
<dbReference type="FunFam" id="2.60.260.20:FF:000004">
    <property type="entry name" value="Molecular chaperone DnaJ"/>
    <property type="match status" value="1"/>
</dbReference>
<dbReference type="Gene3D" id="1.10.287.110">
    <property type="entry name" value="DnaJ domain"/>
    <property type="match status" value="1"/>
</dbReference>
<dbReference type="Gene3D" id="2.10.230.10">
    <property type="entry name" value="Heat shock protein DnaJ, cysteine-rich domain"/>
    <property type="match status" value="1"/>
</dbReference>
<dbReference type="Gene3D" id="2.60.260.20">
    <property type="entry name" value="Urease metallochaperone UreE, N-terminal domain"/>
    <property type="match status" value="2"/>
</dbReference>
<dbReference type="HAMAP" id="MF_01152">
    <property type="entry name" value="DnaJ"/>
    <property type="match status" value="1"/>
</dbReference>
<dbReference type="InterPro" id="IPR012724">
    <property type="entry name" value="DnaJ"/>
</dbReference>
<dbReference type="InterPro" id="IPR002939">
    <property type="entry name" value="DnaJ_C"/>
</dbReference>
<dbReference type="InterPro" id="IPR001623">
    <property type="entry name" value="DnaJ_domain"/>
</dbReference>
<dbReference type="InterPro" id="IPR018253">
    <property type="entry name" value="DnaJ_domain_CS"/>
</dbReference>
<dbReference type="InterPro" id="IPR008971">
    <property type="entry name" value="HSP40/DnaJ_pept-bd"/>
</dbReference>
<dbReference type="InterPro" id="IPR001305">
    <property type="entry name" value="HSP_DnaJ_Cys-rich_dom"/>
</dbReference>
<dbReference type="InterPro" id="IPR036410">
    <property type="entry name" value="HSP_DnaJ_Cys-rich_dom_sf"/>
</dbReference>
<dbReference type="InterPro" id="IPR036869">
    <property type="entry name" value="J_dom_sf"/>
</dbReference>
<dbReference type="NCBIfam" id="TIGR02349">
    <property type="entry name" value="DnaJ_bact"/>
    <property type="match status" value="1"/>
</dbReference>
<dbReference type="NCBIfam" id="NF008035">
    <property type="entry name" value="PRK10767.1"/>
    <property type="match status" value="1"/>
</dbReference>
<dbReference type="PANTHER" id="PTHR43096:SF48">
    <property type="entry name" value="CHAPERONE PROTEIN DNAJ"/>
    <property type="match status" value="1"/>
</dbReference>
<dbReference type="PANTHER" id="PTHR43096">
    <property type="entry name" value="DNAJ HOMOLOG 1, MITOCHONDRIAL-RELATED"/>
    <property type="match status" value="1"/>
</dbReference>
<dbReference type="Pfam" id="PF00226">
    <property type="entry name" value="DnaJ"/>
    <property type="match status" value="1"/>
</dbReference>
<dbReference type="Pfam" id="PF01556">
    <property type="entry name" value="DnaJ_C"/>
    <property type="match status" value="1"/>
</dbReference>
<dbReference type="Pfam" id="PF00684">
    <property type="entry name" value="DnaJ_CXXCXGXG"/>
    <property type="match status" value="1"/>
</dbReference>
<dbReference type="PRINTS" id="PR00625">
    <property type="entry name" value="JDOMAIN"/>
</dbReference>
<dbReference type="SMART" id="SM00271">
    <property type="entry name" value="DnaJ"/>
    <property type="match status" value="1"/>
</dbReference>
<dbReference type="SUPFAM" id="SSF46565">
    <property type="entry name" value="Chaperone J-domain"/>
    <property type="match status" value="1"/>
</dbReference>
<dbReference type="SUPFAM" id="SSF57938">
    <property type="entry name" value="DnaJ/Hsp40 cysteine-rich domain"/>
    <property type="match status" value="1"/>
</dbReference>
<dbReference type="SUPFAM" id="SSF49493">
    <property type="entry name" value="HSP40/DnaJ peptide-binding domain"/>
    <property type="match status" value="2"/>
</dbReference>
<dbReference type="PROSITE" id="PS00636">
    <property type="entry name" value="DNAJ_1"/>
    <property type="match status" value="1"/>
</dbReference>
<dbReference type="PROSITE" id="PS50076">
    <property type="entry name" value="DNAJ_2"/>
    <property type="match status" value="1"/>
</dbReference>
<dbReference type="PROSITE" id="PS51188">
    <property type="entry name" value="ZF_CR"/>
    <property type="match status" value="1"/>
</dbReference>
<keyword id="KW-0143">Chaperone</keyword>
<keyword id="KW-0963">Cytoplasm</keyword>
<keyword id="KW-0235">DNA replication</keyword>
<keyword id="KW-0479">Metal-binding</keyword>
<keyword id="KW-0677">Repeat</keyword>
<keyword id="KW-0346">Stress response</keyword>
<keyword id="KW-0862">Zinc</keyword>
<keyword id="KW-0863">Zinc-finger</keyword>
<accession>B4TIB5</accession>
<proteinExistence type="inferred from homology"/>
<protein>
    <recommendedName>
        <fullName evidence="1">Chaperone protein DnaJ</fullName>
    </recommendedName>
</protein>
<evidence type="ECO:0000255" key="1">
    <source>
        <dbReference type="HAMAP-Rule" id="MF_01152"/>
    </source>
</evidence>
<name>DNAJ_SALHS</name>
<feature type="chain" id="PRO_1000137723" description="Chaperone protein DnaJ">
    <location>
        <begin position="1"/>
        <end position="379"/>
    </location>
</feature>
<feature type="domain" description="J" evidence="1">
    <location>
        <begin position="5"/>
        <end position="70"/>
    </location>
</feature>
<feature type="repeat" description="CXXCXGXG motif">
    <location>
        <begin position="147"/>
        <end position="154"/>
    </location>
</feature>
<feature type="repeat" description="CXXCXGXG motif">
    <location>
        <begin position="164"/>
        <end position="171"/>
    </location>
</feature>
<feature type="repeat" description="CXXCXGXG motif">
    <location>
        <begin position="186"/>
        <end position="193"/>
    </location>
</feature>
<feature type="repeat" description="CXXCXGXG motif">
    <location>
        <begin position="200"/>
        <end position="207"/>
    </location>
</feature>
<feature type="zinc finger region" description="CR-type" evidence="1">
    <location>
        <begin position="134"/>
        <end position="212"/>
    </location>
</feature>
<feature type="binding site" evidence="1">
    <location>
        <position position="147"/>
    </location>
    <ligand>
        <name>Zn(2+)</name>
        <dbReference type="ChEBI" id="CHEBI:29105"/>
        <label>1</label>
    </ligand>
</feature>
<feature type="binding site" evidence="1">
    <location>
        <position position="150"/>
    </location>
    <ligand>
        <name>Zn(2+)</name>
        <dbReference type="ChEBI" id="CHEBI:29105"/>
        <label>1</label>
    </ligand>
</feature>
<feature type="binding site" evidence="1">
    <location>
        <position position="164"/>
    </location>
    <ligand>
        <name>Zn(2+)</name>
        <dbReference type="ChEBI" id="CHEBI:29105"/>
        <label>2</label>
    </ligand>
</feature>
<feature type="binding site" evidence="1">
    <location>
        <position position="167"/>
    </location>
    <ligand>
        <name>Zn(2+)</name>
        <dbReference type="ChEBI" id="CHEBI:29105"/>
        <label>2</label>
    </ligand>
</feature>
<feature type="binding site" evidence="1">
    <location>
        <position position="186"/>
    </location>
    <ligand>
        <name>Zn(2+)</name>
        <dbReference type="ChEBI" id="CHEBI:29105"/>
        <label>2</label>
    </ligand>
</feature>
<feature type="binding site" evidence="1">
    <location>
        <position position="189"/>
    </location>
    <ligand>
        <name>Zn(2+)</name>
        <dbReference type="ChEBI" id="CHEBI:29105"/>
        <label>2</label>
    </ligand>
</feature>
<feature type="binding site" evidence="1">
    <location>
        <position position="200"/>
    </location>
    <ligand>
        <name>Zn(2+)</name>
        <dbReference type="ChEBI" id="CHEBI:29105"/>
        <label>1</label>
    </ligand>
</feature>
<feature type="binding site" evidence="1">
    <location>
        <position position="203"/>
    </location>
    <ligand>
        <name>Zn(2+)</name>
        <dbReference type="ChEBI" id="CHEBI:29105"/>
        <label>1</label>
    </ligand>
</feature>